<comment type="function">
    <text evidence="1">The RecF protein is involved in DNA metabolism; it is required for DNA replication and normal SOS inducibility. RecF binds preferentially to single-stranded, linear DNA. It also seems to bind ATP.</text>
</comment>
<comment type="subcellular location">
    <subcellularLocation>
        <location evidence="1">Cytoplasm</location>
    </subcellularLocation>
</comment>
<comment type="similarity">
    <text evidence="1">Belongs to the RecF family.</text>
</comment>
<protein>
    <recommendedName>
        <fullName evidence="1">DNA replication and repair protein RecF</fullName>
    </recommendedName>
</protein>
<dbReference type="EMBL" id="CR954253">
    <property type="protein sequence ID" value="CAI96850.1"/>
    <property type="molecule type" value="Genomic_DNA"/>
</dbReference>
<dbReference type="RefSeq" id="WP_003623649.1">
    <property type="nucleotide sequence ID" value="NZ_JQAV01000011.1"/>
</dbReference>
<dbReference type="SMR" id="Q1GC40"/>
<dbReference type="STRING" id="390333.Ldb0004"/>
<dbReference type="KEGG" id="ldb:Ldb0004"/>
<dbReference type="PATRIC" id="fig|390333.13.peg.532"/>
<dbReference type="eggNOG" id="COG1195">
    <property type="taxonomic scope" value="Bacteria"/>
</dbReference>
<dbReference type="HOGENOM" id="CLU_040267_0_1_9"/>
<dbReference type="BioCyc" id="LDEL390333:LDB_RS00020-MONOMER"/>
<dbReference type="Proteomes" id="UP000001259">
    <property type="component" value="Chromosome"/>
</dbReference>
<dbReference type="GO" id="GO:0005737">
    <property type="term" value="C:cytoplasm"/>
    <property type="evidence" value="ECO:0007669"/>
    <property type="project" value="UniProtKB-SubCell"/>
</dbReference>
<dbReference type="GO" id="GO:0005524">
    <property type="term" value="F:ATP binding"/>
    <property type="evidence" value="ECO:0007669"/>
    <property type="project" value="UniProtKB-UniRule"/>
</dbReference>
<dbReference type="GO" id="GO:0003697">
    <property type="term" value="F:single-stranded DNA binding"/>
    <property type="evidence" value="ECO:0007669"/>
    <property type="project" value="UniProtKB-UniRule"/>
</dbReference>
<dbReference type="GO" id="GO:0006260">
    <property type="term" value="P:DNA replication"/>
    <property type="evidence" value="ECO:0007669"/>
    <property type="project" value="UniProtKB-UniRule"/>
</dbReference>
<dbReference type="GO" id="GO:0000731">
    <property type="term" value="P:DNA synthesis involved in DNA repair"/>
    <property type="evidence" value="ECO:0007669"/>
    <property type="project" value="TreeGrafter"/>
</dbReference>
<dbReference type="GO" id="GO:0006302">
    <property type="term" value="P:double-strand break repair"/>
    <property type="evidence" value="ECO:0007669"/>
    <property type="project" value="TreeGrafter"/>
</dbReference>
<dbReference type="GO" id="GO:0009432">
    <property type="term" value="P:SOS response"/>
    <property type="evidence" value="ECO:0007669"/>
    <property type="project" value="UniProtKB-UniRule"/>
</dbReference>
<dbReference type="CDD" id="cd03242">
    <property type="entry name" value="ABC_RecF"/>
    <property type="match status" value="1"/>
</dbReference>
<dbReference type="Gene3D" id="3.40.50.300">
    <property type="entry name" value="P-loop containing nucleotide triphosphate hydrolases"/>
    <property type="match status" value="1"/>
</dbReference>
<dbReference type="Gene3D" id="1.20.1050.90">
    <property type="entry name" value="RecF/RecN/SMC, N-terminal domain"/>
    <property type="match status" value="1"/>
</dbReference>
<dbReference type="HAMAP" id="MF_00365">
    <property type="entry name" value="RecF"/>
    <property type="match status" value="1"/>
</dbReference>
<dbReference type="InterPro" id="IPR001238">
    <property type="entry name" value="DNA-binding_RecF"/>
</dbReference>
<dbReference type="InterPro" id="IPR018078">
    <property type="entry name" value="DNA-binding_RecF_CS"/>
</dbReference>
<dbReference type="InterPro" id="IPR027417">
    <property type="entry name" value="P-loop_NTPase"/>
</dbReference>
<dbReference type="InterPro" id="IPR003395">
    <property type="entry name" value="RecF/RecN/SMC_N"/>
</dbReference>
<dbReference type="InterPro" id="IPR042174">
    <property type="entry name" value="RecF_2"/>
</dbReference>
<dbReference type="NCBIfam" id="TIGR00611">
    <property type="entry name" value="recf"/>
    <property type="match status" value="1"/>
</dbReference>
<dbReference type="PANTHER" id="PTHR32182">
    <property type="entry name" value="DNA REPLICATION AND REPAIR PROTEIN RECF"/>
    <property type="match status" value="1"/>
</dbReference>
<dbReference type="PANTHER" id="PTHR32182:SF0">
    <property type="entry name" value="DNA REPLICATION AND REPAIR PROTEIN RECF"/>
    <property type="match status" value="1"/>
</dbReference>
<dbReference type="Pfam" id="PF02463">
    <property type="entry name" value="SMC_N"/>
    <property type="match status" value="1"/>
</dbReference>
<dbReference type="SUPFAM" id="SSF52540">
    <property type="entry name" value="P-loop containing nucleoside triphosphate hydrolases"/>
    <property type="match status" value="1"/>
</dbReference>
<dbReference type="PROSITE" id="PS00617">
    <property type="entry name" value="RECF_1"/>
    <property type="match status" value="1"/>
</dbReference>
<dbReference type="PROSITE" id="PS00618">
    <property type="entry name" value="RECF_2"/>
    <property type="match status" value="1"/>
</dbReference>
<sequence>MYLSRFKQSGFRNLAPLNLEFDPHVNVFLGENAQGKTNLLEAIYFLAISRSHRTSNDREMIAFGQDFASLAGRVHKRQLDLDLRIVISKKGKSAWVNRVEQARLSKYVGHLNAILFSPEDMELVKGAPSLRRRFMDLEFGQINPEYLYFASQYRQLLQQRNNYLKQLARRQASDQVLLGVLTEQVATAASELIWRRYRYLADLNRYAAEAYRAISGQREELRVLYRPSAKEITAADQPAQIKQKLLDRFAEIADDELRRATTQLGPHRDDLEFQLDGKNAHLFASQGQQRTIALSLKLAEIQLIKQLTGEEPILLLDDVMSELDQNRQAALLNFIHGQTQTFITTTDLDSISQEIVKQPRIFYIHSGQIIEKEEGLNGRRR</sequence>
<reference key="1">
    <citation type="journal article" date="2006" name="Proc. Natl. Acad. Sci. U.S.A.">
        <title>The complete genome sequence of Lactobacillus bulgaricus reveals extensive and ongoing reductive evolution.</title>
        <authorList>
            <person name="van de Guchte M."/>
            <person name="Penaud S."/>
            <person name="Grimaldi C."/>
            <person name="Barbe V."/>
            <person name="Bryson K."/>
            <person name="Nicolas P."/>
            <person name="Robert C."/>
            <person name="Oztas S."/>
            <person name="Mangenot S."/>
            <person name="Couloux A."/>
            <person name="Loux V."/>
            <person name="Dervyn R."/>
            <person name="Bossy R."/>
            <person name="Bolotin A."/>
            <person name="Batto J.-M."/>
            <person name="Walunas T."/>
            <person name="Gibrat J.-F."/>
            <person name="Bessieres P."/>
            <person name="Weissenbach J."/>
            <person name="Ehrlich S.D."/>
            <person name="Maguin E."/>
        </authorList>
    </citation>
    <scope>NUCLEOTIDE SEQUENCE [LARGE SCALE GENOMIC DNA]</scope>
    <source>
        <strain>ATCC 11842 / DSM 20081 / BCRC 10696 / JCM 1002 / NBRC 13953 / NCIMB 11778 / NCTC 12712 / WDCM 00102 / Lb 14</strain>
    </source>
</reference>
<evidence type="ECO:0000255" key="1">
    <source>
        <dbReference type="HAMAP-Rule" id="MF_00365"/>
    </source>
</evidence>
<accession>Q1GC40</accession>
<proteinExistence type="inferred from homology"/>
<keyword id="KW-0067">ATP-binding</keyword>
<keyword id="KW-0963">Cytoplasm</keyword>
<keyword id="KW-0227">DNA damage</keyword>
<keyword id="KW-0234">DNA repair</keyword>
<keyword id="KW-0235">DNA replication</keyword>
<keyword id="KW-0238">DNA-binding</keyword>
<keyword id="KW-0547">Nucleotide-binding</keyword>
<keyword id="KW-1185">Reference proteome</keyword>
<keyword id="KW-0742">SOS response</keyword>
<gene>
    <name evidence="1" type="primary">recF</name>
    <name type="ordered locus">Ldb0004</name>
</gene>
<feature type="chain" id="PRO_1000048531" description="DNA replication and repair protein RecF">
    <location>
        <begin position="1"/>
        <end position="381"/>
    </location>
</feature>
<feature type="binding site" evidence="1">
    <location>
        <begin position="30"/>
        <end position="37"/>
    </location>
    <ligand>
        <name>ATP</name>
        <dbReference type="ChEBI" id="CHEBI:30616"/>
    </ligand>
</feature>
<organism>
    <name type="scientific">Lactobacillus delbrueckii subsp. bulgaricus (strain ATCC 11842 / DSM 20081 / BCRC 10696 / JCM 1002 / NBRC 13953 / NCIMB 11778 / NCTC 12712 / WDCM 00102 / Lb 14)</name>
    <dbReference type="NCBI Taxonomy" id="390333"/>
    <lineage>
        <taxon>Bacteria</taxon>
        <taxon>Bacillati</taxon>
        <taxon>Bacillota</taxon>
        <taxon>Bacilli</taxon>
        <taxon>Lactobacillales</taxon>
        <taxon>Lactobacillaceae</taxon>
        <taxon>Lactobacillus</taxon>
    </lineage>
</organism>
<name>RECF_LACDA</name>